<name>Y1074_MANSM</name>
<organism>
    <name type="scientific">Mannheimia succiniciproducens (strain KCTC 0769BP / MBEL55E)</name>
    <dbReference type="NCBI Taxonomy" id="221988"/>
    <lineage>
        <taxon>Bacteria</taxon>
        <taxon>Pseudomonadati</taxon>
        <taxon>Pseudomonadota</taxon>
        <taxon>Gammaproteobacteria</taxon>
        <taxon>Pasteurellales</taxon>
        <taxon>Pasteurellaceae</taxon>
        <taxon>Basfia</taxon>
    </lineage>
</organism>
<protein>
    <recommendedName>
        <fullName evidence="1">UPF0181 protein MS1074</fullName>
    </recommendedName>
</protein>
<accession>Q65TM9</accession>
<dbReference type="EMBL" id="AE016827">
    <property type="protein sequence ID" value="AAU37681.1"/>
    <property type="status" value="ALT_INIT"/>
    <property type="molecule type" value="Genomic_DNA"/>
</dbReference>
<dbReference type="RefSeq" id="WP_041639720.1">
    <property type="nucleotide sequence ID" value="NC_006300.1"/>
</dbReference>
<dbReference type="SMR" id="Q65TM9"/>
<dbReference type="STRING" id="221988.MS1074"/>
<dbReference type="KEGG" id="msu:MS1074"/>
<dbReference type="eggNOG" id="COG3140">
    <property type="taxonomic scope" value="Bacteria"/>
</dbReference>
<dbReference type="HOGENOM" id="CLU_2633904_0_0_6"/>
<dbReference type="OrthoDB" id="6522084at2"/>
<dbReference type="Proteomes" id="UP000000607">
    <property type="component" value="Chromosome"/>
</dbReference>
<dbReference type="HAMAP" id="MF_00507">
    <property type="entry name" value="UPF0181"/>
    <property type="match status" value="1"/>
</dbReference>
<dbReference type="InterPro" id="IPR005371">
    <property type="entry name" value="UPF0181"/>
</dbReference>
<dbReference type="NCBIfam" id="NF003476">
    <property type="entry name" value="PRK05114.1"/>
    <property type="match status" value="1"/>
</dbReference>
<dbReference type="Pfam" id="PF03701">
    <property type="entry name" value="UPF0181"/>
    <property type="match status" value="1"/>
</dbReference>
<comment type="similarity">
    <text evidence="1">Belongs to the UPF0181 family.</text>
</comment>
<comment type="sequence caution" evidence="2">
    <conflict type="erroneous initiation">
        <sequence resource="EMBL-CDS" id="AAU37681"/>
    </conflict>
</comment>
<proteinExistence type="inferred from homology"/>
<reference key="1">
    <citation type="journal article" date="2004" name="Nat. Biotechnol.">
        <title>The genome sequence of the capnophilic rumen bacterium Mannheimia succiniciproducens.</title>
        <authorList>
            <person name="Hong S.H."/>
            <person name="Kim J.S."/>
            <person name="Lee S.Y."/>
            <person name="In Y.H."/>
            <person name="Choi S.S."/>
            <person name="Rih J.-K."/>
            <person name="Kim C.H."/>
            <person name="Jeong H."/>
            <person name="Hur C.G."/>
            <person name="Kim J.J."/>
        </authorList>
    </citation>
    <scope>NUCLEOTIDE SEQUENCE [LARGE SCALE GENOMIC DNA]</scope>
    <source>
        <strain>KCTC 0769BP / MBEL55E</strain>
    </source>
</reference>
<sequence>MFDNALLSLSHEQQQQAVEKIQVLMQRGMSSGEAIALVAKELREAHDNEKINSEKTKSAEK</sequence>
<gene>
    <name type="ordered locus">MS1074</name>
</gene>
<evidence type="ECO:0000255" key="1">
    <source>
        <dbReference type="HAMAP-Rule" id="MF_00507"/>
    </source>
</evidence>
<evidence type="ECO:0000305" key="2"/>
<feature type="chain" id="PRO_0000236630" description="UPF0181 protein MS1074">
    <location>
        <begin position="1"/>
        <end position="61"/>
    </location>
</feature>